<reference key="1">
    <citation type="journal article" date="2003" name="Proc. Natl. Acad. Sci. U.S.A.">
        <title>The complete genome sequence of the Arabidopsis and tomato pathogen Pseudomonas syringae pv. tomato DC3000.</title>
        <authorList>
            <person name="Buell C.R."/>
            <person name="Joardar V."/>
            <person name="Lindeberg M."/>
            <person name="Selengut J."/>
            <person name="Paulsen I.T."/>
            <person name="Gwinn M.L."/>
            <person name="Dodson R.J."/>
            <person name="DeBoy R.T."/>
            <person name="Durkin A.S."/>
            <person name="Kolonay J.F."/>
            <person name="Madupu R."/>
            <person name="Daugherty S.C."/>
            <person name="Brinkac L.M."/>
            <person name="Beanan M.J."/>
            <person name="Haft D.H."/>
            <person name="Nelson W.C."/>
            <person name="Davidsen T.M."/>
            <person name="Zafar N."/>
            <person name="Zhou L."/>
            <person name="Liu J."/>
            <person name="Yuan Q."/>
            <person name="Khouri H.M."/>
            <person name="Fedorova N.B."/>
            <person name="Tran B."/>
            <person name="Russell D."/>
            <person name="Berry K.J."/>
            <person name="Utterback T.R."/>
            <person name="Van Aken S.E."/>
            <person name="Feldblyum T.V."/>
            <person name="D'Ascenzo M."/>
            <person name="Deng W.-L."/>
            <person name="Ramos A.R."/>
            <person name="Alfano J.R."/>
            <person name="Cartinhour S."/>
            <person name="Chatterjee A.K."/>
            <person name="Delaney T.P."/>
            <person name="Lazarowitz S.G."/>
            <person name="Martin G.B."/>
            <person name="Schneider D.J."/>
            <person name="Tang X."/>
            <person name="Bender C.L."/>
            <person name="White O."/>
            <person name="Fraser C.M."/>
            <person name="Collmer A."/>
        </authorList>
    </citation>
    <scope>NUCLEOTIDE SEQUENCE [LARGE SCALE GENOMIC DNA]</scope>
    <source>
        <strain>ATCC BAA-871 / DC3000</strain>
    </source>
</reference>
<gene>
    <name evidence="1" type="primary">nuoK</name>
    <name type="ordered locus">PSPTO_3374</name>
</gene>
<evidence type="ECO:0000255" key="1">
    <source>
        <dbReference type="HAMAP-Rule" id="MF_01456"/>
    </source>
</evidence>
<feature type="chain" id="PRO_0000390177" description="NADH-quinone oxidoreductase subunit K">
    <location>
        <begin position="1"/>
        <end position="102"/>
    </location>
</feature>
<feature type="transmembrane region" description="Helical" evidence="1">
    <location>
        <begin position="6"/>
        <end position="26"/>
    </location>
</feature>
<feature type="transmembrane region" description="Helical" evidence="1">
    <location>
        <begin position="30"/>
        <end position="50"/>
    </location>
</feature>
<feature type="transmembrane region" description="Helical" evidence="1">
    <location>
        <begin position="62"/>
        <end position="82"/>
    </location>
</feature>
<accession>Q87ZQ0</accession>
<proteinExistence type="inferred from homology"/>
<name>NUOK_PSESM</name>
<protein>
    <recommendedName>
        <fullName evidence="1">NADH-quinone oxidoreductase subunit K</fullName>
        <ecNumber evidence="1">7.1.1.-</ecNumber>
    </recommendedName>
    <alternativeName>
        <fullName evidence="1">NADH dehydrogenase I subunit K</fullName>
    </alternativeName>
    <alternativeName>
        <fullName evidence="1">NDH-1 subunit K</fullName>
    </alternativeName>
</protein>
<keyword id="KW-0997">Cell inner membrane</keyword>
<keyword id="KW-1003">Cell membrane</keyword>
<keyword id="KW-0472">Membrane</keyword>
<keyword id="KW-0520">NAD</keyword>
<keyword id="KW-0874">Quinone</keyword>
<keyword id="KW-1185">Reference proteome</keyword>
<keyword id="KW-1278">Translocase</keyword>
<keyword id="KW-0812">Transmembrane</keyword>
<keyword id="KW-1133">Transmembrane helix</keyword>
<keyword id="KW-0813">Transport</keyword>
<keyword id="KW-0830">Ubiquinone</keyword>
<dbReference type="EC" id="7.1.1.-" evidence="1"/>
<dbReference type="EMBL" id="AE016853">
    <property type="protein sequence ID" value="AAO56852.1"/>
    <property type="molecule type" value="Genomic_DNA"/>
</dbReference>
<dbReference type="RefSeq" id="NP_793157.1">
    <property type="nucleotide sequence ID" value="NC_004578.1"/>
</dbReference>
<dbReference type="RefSeq" id="WP_003380111.1">
    <property type="nucleotide sequence ID" value="NC_004578.1"/>
</dbReference>
<dbReference type="SMR" id="Q87ZQ0"/>
<dbReference type="STRING" id="223283.PSPTO_3374"/>
<dbReference type="GeneID" id="96219673"/>
<dbReference type="KEGG" id="pst:PSPTO_3374"/>
<dbReference type="PATRIC" id="fig|223283.9.peg.3454"/>
<dbReference type="eggNOG" id="COG0713">
    <property type="taxonomic scope" value="Bacteria"/>
</dbReference>
<dbReference type="HOGENOM" id="CLU_144724_0_1_6"/>
<dbReference type="OrthoDB" id="9801357at2"/>
<dbReference type="PhylomeDB" id="Q87ZQ0"/>
<dbReference type="Proteomes" id="UP000002515">
    <property type="component" value="Chromosome"/>
</dbReference>
<dbReference type="GO" id="GO:0030964">
    <property type="term" value="C:NADH dehydrogenase complex"/>
    <property type="evidence" value="ECO:0007669"/>
    <property type="project" value="TreeGrafter"/>
</dbReference>
<dbReference type="GO" id="GO:0005886">
    <property type="term" value="C:plasma membrane"/>
    <property type="evidence" value="ECO:0007669"/>
    <property type="project" value="UniProtKB-SubCell"/>
</dbReference>
<dbReference type="GO" id="GO:0050136">
    <property type="term" value="F:NADH:ubiquinone reductase (non-electrogenic) activity"/>
    <property type="evidence" value="ECO:0007669"/>
    <property type="project" value="UniProtKB-UniRule"/>
</dbReference>
<dbReference type="GO" id="GO:0048038">
    <property type="term" value="F:quinone binding"/>
    <property type="evidence" value="ECO:0007669"/>
    <property type="project" value="UniProtKB-KW"/>
</dbReference>
<dbReference type="GO" id="GO:0042773">
    <property type="term" value="P:ATP synthesis coupled electron transport"/>
    <property type="evidence" value="ECO:0007669"/>
    <property type="project" value="InterPro"/>
</dbReference>
<dbReference type="FunFam" id="1.10.287.3510:FF:000001">
    <property type="entry name" value="NADH-quinone oxidoreductase subunit K"/>
    <property type="match status" value="1"/>
</dbReference>
<dbReference type="Gene3D" id="1.10.287.3510">
    <property type="match status" value="1"/>
</dbReference>
<dbReference type="HAMAP" id="MF_01456">
    <property type="entry name" value="NDH1_NuoK"/>
    <property type="match status" value="1"/>
</dbReference>
<dbReference type="InterPro" id="IPR001133">
    <property type="entry name" value="NADH_UbQ_OxRdtase_chain4L/K"/>
</dbReference>
<dbReference type="InterPro" id="IPR039428">
    <property type="entry name" value="NUOK/Mnh_C1-like"/>
</dbReference>
<dbReference type="NCBIfam" id="NF004319">
    <property type="entry name" value="PRK05715.1-1"/>
    <property type="match status" value="1"/>
</dbReference>
<dbReference type="NCBIfam" id="NF004320">
    <property type="entry name" value="PRK05715.1-2"/>
    <property type="match status" value="1"/>
</dbReference>
<dbReference type="PANTHER" id="PTHR11434:SF16">
    <property type="entry name" value="NADH-UBIQUINONE OXIDOREDUCTASE CHAIN 4L"/>
    <property type="match status" value="1"/>
</dbReference>
<dbReference type="PANTHER" id="PTHR11434">
    <property type="entry name" value="NADH-UBIQUINONE OXIDOREDUCTASE SUBUNIT ND4L"/>
    <property type="match status" value="1"/>
</dbReference>
<dbReference type="Pfam" id="PF00420">
    <property type="entry name" value="Oxidored_q2"/>
    <property type="match status" value="1"/>
</dbReference>
<comment type="function">
    <text evidence="1">NDH-1 shuttles electrons from NADH, via FMN and iron-sulfur (Fe-S) centers, to quinones in the respiratory chain. The immediate electron acceptor for the enzyme in this species is believed to be ubiquinone. Couples the redox reaction to proton translocation (for every two electrons transferred, four hydrogen ions are translocated across the cytoplasmic membrane), and thus conserves the redox energy in a proton gradient.</text>
</comment>
<comment type="catalytic activity">
    <reaction evidence="1">
        <text>a quinone + NADH + 5 H(+)(in) = a quinol + NAD(+) + 4 H(+)(out)</text>
        <dbReference type="Rhea" id="RHEA:57888"/>
        <dbReference type="ChEBI" id="CHEBI:15378"/>
        <dbReference type="ChEBI" id="CHEBI:24646"/>
        <dbReference type="ChEBI" id="CHEBI:57540"/>
        <dbReference type="ChEBI" id="CHEBI:57945"/>
        <dbReference type="ChEBI" id="CHEBI:132124"/>
    </reaction>
</comment>
<comment type="subunit">
    <text evidence="1">NDH-1 is composed of 13 different subunits. Subunits NuoA, H, J, K, L, M, N constitute the membrane sector of the complex.</text>
</comment>
<comment type="subcellular location">
    <subcellularLocation>
        <location evidence="1">Cell inner membrane</location>
        <topology evidence="1">Multi-pass membrane protein</topology>
    </subcellularLocation>
</comment>
<comment type="similarity">
    <text evidence="1">Belongs to the complex I subunit 4L family.</text>
</comment>
<organism>
    <name type="scientific">Pseudomonas syringae pv. tomato (strain ATCC BAA-871 / DC3000)</name>
    <dbReference type="NCBI Taxonomy" id="223283"/>
    <lineage>
        <taxon>Bacteria</taxon>
        <taxon>Pseudomonadati</taxon>
        <taxon>Pseudomonadota</taxon>
        <taxon>Gammaproteobacteria</taxon>
        <taxon>Pseudomonadales</taxon>
        <taxon>Pseudomonadaceae</taxon>
        <taxon>Pseudomonas</taxon>
    </lineage>
</organism>
<sequence>MNAIPLEHGLAVAGVLFCLGLVGLMVRRNILFVLMSLEIMMNAAALAFVVAGSRWAQPDGQVMFILVISLAAAEASIGLAILMQLYRRFHTLDIDAASEMRG</sequence>